<accession>Q2RFP0</accession>
<reference key="1">
    <citation type="journal article" date="2008" name="Environ. Microbiol.">
        <title>The complete genome sequence of Moorella thermoacetica (f. Clostridium thermoaceticum).</title>
        <authorList>
            <person name="Pierce E."/>
            <person name="Xie G."/>
            <person name="Barabote R.D."/>
            <person name="Saunders E."/>
            <person name="Han C.S."/>
            <person name="Detter J.C."/>
            <person name="Richardson P."/>
            <person name="Brettin T.S."/>
            <person name="Das A."/>
            <person name="Ljungdahl L.G."/>
            <person name="Ragsdale S.W."/>
        </authorList>
    </citation>
    <scope>NUCLEOTIDE SEQUENCE [LARGE SCALE GENOMIC DNA]</scope>
    <source>
        <strain>ATCC 39073 / JCM 9320</strain>
    </source>
</reference>
<evidence type="ECO:0000255" key="1">
    <source>
        <dbReference type="HAMAP-Rule" id="MF_01322"/>
    </source>
</evidence>
<sequence>MLDVSNFERMRIGLASPEQIRAWSSGEVKKPETINYRTLKPERDGLFCERIFGPTKDWECHCGKYKRVRYKGIVCDRCGVEVTRAKVRRERMGHIELAAPVSHIWYFKGIPSRMGLILDMSPRSLEKVLYFVAYVVIDPGDTPLVKKQLLTEAEYREYRDKYGNAFRAAMGAEAIKELLQEIDLDQLAAELRQELKESSGQRKIRALRRLEVVEAFRSSGNRPEWMIMDVIPVIPPELRPMVQLDGGRFATSDLNDLYRRVINRNNRLKRLLDLGAPDIIVRNEKRMLQEAVDALIDNGRRGRPVTGPGNRPLKSLSDMLKGKQGRFRQNLLGKRVDYSGRSVIVVGPELKMHQCGLPKEMALELFKPFVMKRLVDKGLAHNIKSAKRMVERVKNEVWDVLEEVISEHPVLLNRAPTLHRLGIQAFEPVLVEGRAIQIHPLVCTAYNADFDGDQMAVHVPLSAEAQAEARLLMMAAHHILNPKDGRPVVSPTQDMVLGAYYLTTVSKGARGEGKAFSSYDEAYMAYLNKVIDMHAMIKVRQEDGQLLETTIGRLIFNREIPIPKELGYYNCEVDKKKLTEIIARCYQLLGTEATATLLDGIKKVGFHYSTLAGFTIGIDDIVVPGDKKEIIAETESAVEKIDQQYRKGLISEEERYQKVISLWNNATDTLTKKLMAGMDKFNPVFMMANSGARGNVQQIRQLAGMRGLMADPSGRIIDLPIKANFREGLTVLEYFISTHGARKGLADTALRTADSGYLTRRLVDVAQDVIVREDDCGTTAGIEVREIQEGNQVIEKMEERLAGRYALEDVRHPETGELLVAANTMIDDDAARAIVQAGIKTVKIRSVLTCKTRYGVCRKCYGRDLATGREVEIGEAVGIIAAQSIGEPGTQLTMRTFHTGGVAGDDITQGLSRVEELFEARKPKGQAIIAETTGTITAITEVRGRREIEITDDSGEKFSYQVPYGSRLKVAEGDHVEAGDELTGGSVNPHDLLKVKGVRGVQLYLLREVQRVYRLQGVDINDKHIEVMIRQMLRKVKVEDQGDTDLLPGSLVDAFDFEDANRKVQEIGGKPATARPVLLGITKASLATDSFLSAASFQETTRVLTEAAIKGRVDPLLGLKENVIIGKLIPAGTGMSRYRQLKLVTPAVDQEEDGAEAVDMATGK</sequence>
<feature type="chain" id="PRO_0000240808" description="DNA-directed RNA polymerase subunit beta'">
    <location>
        <begin position="1"/>
        <end position="1164"/>
    </location>
</feature>
<feature type="binding site" evidence="1">
    <location>
        <position position="60"/>
    </location>
    <ligand>
        <name>Zn(2+)</name>
        <dbReference type="ChEBI" id="CHEBI:29105"/>
        <label>1</label>
    </ligand>
</feature>
<feature type="binding site" evidence="1">
    <location>
        <position position="62"/>
    </location>
    <ligand>
        <name>Zn(2+)</name>
        <dbReference type="ChEBI" id="CHEBI:29105"/>
        <label>1</label>
    </ligand>
</feature>
<feature type="binding site" evidence="1">
    <location>
        <position position="75"/>
    </location>
    <ligand>
        <name>Zn(2+)</name>
        <dbReference type="ChEBI" id="CHEBI:29105"/>
        <label>1</label>
    </ligand>
</feature>
<feature type="binding site" evidence="1">
    <location>
        <position position="78"/>
    </location>
    <ligand>
        <name>Zn(2+)</name>
        <dbReference type="ChEBI" id="CHEBI:29105"/>
        <label>1</label>
    </ligand>
</feature>
<feature type="binding site" evidence="1">
    <location>
        <position position="449"/>
    </location>
    <ligand>
        <name>Mg(2+)</name>
        <dbReference type="ChEBI" id="CHEBI:18420"/>
    </ligand>
</feature>
<feature type="binding site" evidence="1">
    <location>
        <position position="451"/>
    </location>
    <ligand>
        <name>Mg(2+)</name>
        <dbReference type="ChEBI" id="CHEBI:18420"/>
    </ligand>
</feature>
<feature type="binding site" evidence="1">
    <location>
        <position position="453"/>
    </location>
    <ligand>
        <name>Mg(2+)</name>
        <dbReference type="ChEBI" id="CHEBI:18420"/>
    </ligand>
</feature>
<feature type="binding site" evidence="1">
    <location>
        <position position="776"/>
    </location>
    <ligand>
        <name>Zn(2+)</name>
        <dbReference type="ChEBI" id="CHEBI:29105"/>
        <label>2</label>
    </ligand>
</feature>
<feature type="binding site" evidence="1">
    <location>
        <position position="850"/>
    </location>
    <ligand>
        <name>Zn(2+)</name>
        <dbReference type="ChEBI" id="CHEBI:29105"/>
        <label>2</label>
    </ligand>
</feature>
<feature type="binding site" evidence="1">
    <location>
        <position position="857"/>
    </location>
    <ligand>
        <name>Zn(2+)</name>
        <dbReference type="ChEBI" id="CHEBI:29105"/>
        <label>2</label>
    </ligand>
</feature>
<feature type="binding site" evidence="1">
    <location>
        <position position="860"/>
    </location>
    <ligand>
        <name>Zn(2+)</name>
        <dbReference type="ChEBI" id="CHEBI:29105"/>
        <label>2</label>
    </ligand>
</feature>
<keyword id="KW-0240">DNA-directed RNA polymerase</keyword>
<keyword id="KW-0460">Magnesium</keyword>
<keyword id="KW-0479">Metal-binding</keyword>
<keyword id="KW-0548">Nucleotidyltransferase</keyword>
<keyword id="KW-0804">Transcription</keyword>
<keyword id="KW-0808">Transferase</keyword>
<keyword id="KW-0862">Zinc</keyword>
<name>RPOC_MOOTA</name>
<proteinExistence type="inferred from homology"/>
<organism>
    <name type="scientific">Moorella thermoacetica (strain ATCC 39073 / JCM 9320)</name>
    <dbReference type="NCBI Taxonomy" id="264732"/>
    <lineage>
        <taxon>Bacteria</taxon>
        <taxon>Bacillati</taxon>
        <taxon>Bacillota</taxon>
        <taxon>Clostridia</taxon>
        <taxon>Moorellales</taxon>
        <taxon>Moorellaceae</taxon>
        <taxon>Moorella</taxon>
    </lineage>
</organism>
<comment type="function">
    <text evidence="1">DNA-dependent RNA polymerase catalyzes the transcription of DNA into RNA using the four ribonucleoside triphosphates as substrates.</text>
</comment>
<comment type="catalytic activity">
    <reaction evidence="1">
        <text>RNA(n) + a ribonucleoside 5'-triphosphate = RNA(n+1) + diphosphate</text>
        <dbReference type="Rhea" id="RHEA:21248"/>
        <dbReference type="Rhea" id="RHEA-COMP:14527"/>
        <dbReference type="Rhea" id="RHEA-COMP:17342"/>
        <dbReference type="ChEBI" id="CHEBI:33019"/>
        <dbReference type="ChEBI" id="CHEBI:61557"/>
        <dbReference type="ChEBI" id="CHEBI:140395"/>
        <dbReference type="EC" id="2.7.7.6"/>
    </reaction>
</comment>
<comment type="cofactor">
    <cofactor evidence="1">
        <name>Mg(2+)</name>
        <dbReference type="ChEBI" id="CHEBI:18420"/>
    </cofactor>
    <text evidence="1">Binds 1 Mg(2+) ion per subunit.</text>
</comment>
<comment type="cofactor">
    <cofactor evidence="1">
        <name>Zn(2+)</name>
        <dbReference type="ChEBI" id="CHEBI:29105"/>
    </cofactor>
    <text evidence="1">Binds 2 Zn(2+) ions per subunit.</text>
</comment>
<comment type="subunit">
    <text evidence="1">The RNAP catalytic core consists of 2 alpha, 1 beta, 1 beta' and 1 omega subunit. When a sigma factor is associated with the core the holoenzyme is formed, which can initiate transcription.</text>
</comment>
<comment type="similarity">
    <text evidence="1">Belongs to the RNA polymerase beta' chain family.</text>
</comment>
<protein>
    <recommendedName>
        <fullName evidence="1">DNA-directed RNA polymerase subunit beta'</fullName>
        <shortName evidence="1">RNAP subunit beta'</shortName>
        <ecNumber evidence="1">2.7.7.6</ecNumber>
    </recommendedName>
    <alternativeName>
        <fullName evidence="1">RNA polymerase subunit beta'</fullName>
    </alternativeName>
    <alternativeName>
        <fullName evidence="1">Transcriptase subunit beta'</fullName>
    </alternativeName>
</protein>
<gene>
    <name evidence="1" type="primary">rpoC</name>
    <name type="ordered locus">Moth_2467</name>
</gene>
<dbReference type="EC" id="2.7.7.6" evidence="1"/>
<dbReference type="EMBL" id="CP000232">
    <property type="protein sequence ID" value="ABC20749.1"/>
    <property type="molecule type" value="Genomic_DNA"/>
</dbReference>
<dbReference type="RefSeq" id="YP_431292.1">
    <property type="nucleotide sequence ID" value="NC_007644.1"/>
</dbReference>
<dbReference type="SMR" id="Q2RFP0"/>
<dbReference type="STRING" id="264732.Moth_2467"/>
<dbReference type="EnsemblBacteria" id="ABC20749">
    <property type="protein sequence ID" value="ABC20749"/>
    <property type="gene ID" value="Moth_2467"/>
</dbReference>
<dbReference type="KEGG" id="mta:Moth_2467"/>
<dbReference type="PATRIC" id="fig|264732.11.peg.2685"/>
<dbReference type="eggNOG" id="COG0086">
    <property type="taxonomic scope" value="Bacteria"/>
</dbReference>
<dbReference type="HOGENOM" id="CLU_000524_3_1_9"/>
<dbReference type="OrthoDB" id="9815296at2"/>
<dbReference type="GO" id="GO:0000428">
    <property type="term" value="C:DNA-directed RNA polymerase complex"/>
    <property type="evidence" value="ECO:0007669"/>
    <property type="project" value="UniProtKB-KW"/>
</dbReference>
<dbReference type="GO" id="GO:0003677">
    <property type="term" value="F:DNA binding"/>
    <property type="evidence" value="ECO:0007669"/>
    <property type="project" value="UniProtKB-UniRule"/>
</dbReference>
<dbReference type="GO" id="GO:0003899">
    <property type="term" value="F:DNA-directed RNA polymerase activity"/>
    <property type="evidence" value="ECO:0007669"/>
    <property type="project" value="UniProtKB-UniRule"/>
</dbReference>
<dbReference type="GO" id="GO:0000287">
    <property type="term" value="F:magnesium ion binding"/>
    <property type="evidence" value="ECO:0007669"/>
    <property type="project" value="UniProtKB-UniRule"/>
</dbReference>
<dbReference type="GO" id="GO:0008270">
    <property type="term" value="F:zinc ion binding"/>
    <property type="evidence" value="ECO:0007669"/>
    <property type="project" value="UniProtKB-UniRule"/>
</dbReference>
<dbReference type="GO" id="GO:0006351">
    <property type="term" value="P:DNA-templated transcription"/>
    <property type="evidence" value="ECO:0007669"/>
    <property type="project" value="UniProtKB-UniRule"/>
</dbReference>
<dbReference type="CDD" id="cd02655">
    <property type="entry name" value="RNAP_beta'_C"/>
    <property type="match status" value="1"/>
</dbReference>
<dbReference type="CDD" id="cd01609">
    <property type="entry name" value="RNAP_beta'_N"/>
    <property type="match status" value="1"/>
</dbReference>
<dbReference type="FunFam" id="1.10.132.30:FF:000003">
    <property type="entry name" value="DNA-directed RNA polymerase subunit beta"/>
    <property type="match status" value="1"/>
</dbReference>
<dbReference type="FunFam" id="1.10.150.390:FF:000002">
    <property type="entry name" value="DNA-directed RNA polymerase subunit beta"/>
    <property type="match status" value="1"/>
</dbReference>
<dbReference type="FunFam" id="1.10.40.90:FF:000001">
    <property type="entry name" value="DNA-directed RNA polymerase subunit beta"/>
    <property type="match status" value="1"/>
</dbReference>
<dbReference type="FunFam" id="4.10.860.120:FF:000001">
    <property type="entry name" value="DNA-directed RNA polymerase subunit beta"/>
    <property type="match status" value="1"/>
</dbReference>
<dbReference type="Gene3D" id="1.10.132.30">
    <property type="match status" value="1"/>
</dbReference>
<dbReference type="Gene3D" id="1.10.150.390">
    <property type="match status" value="1"/>
</dbReference>
<dbReference type="Gene3D" id="1.10.1790.20">
    <property type="match status" value="1"/>
</dbReference>
<dbReference type="Gene3D" id="1.10.40.90">
    <property type="match status" value="1"/>
</dbReference>
<dbReference type="Gene3D" id="2.40.40.20">
    <property type="match status" value="1"/>
</dbReference>
<dbReference type="Gene3D" id="2.40.50.100">
    <property type="match status" value="1"/>
</dbReference>
<dbReference type="Gene3D" id="4.10.860.120">
    <property type="entry name" value="RNA polymerase II, clamp domain"/>
    <property type="match status" value="1"/>
</dbReference>
<dbReference type="Gene3D" id="1.10.274.100">
    <property type="entry name" value="RNA polymerase Rpb1, domain 3"/>
    <property type="match status" value="2"/>
</dbReference>
<dbReference type="HAMAP" id="MF_01322">
    <property type="entry name" value="RNApol_bact_RpoC"/>
    <property type="match status" value="1"/>
</dbReference>
<dbReference type="InterPro" id="IPR012756">
    <property type="entry name" value="DNA-dir_RpoC2_beta_pp"/>
</dbReference>
<dbReference type="InterPro" id="IPR045867">
    <property type="entry name" value="DNA-dir_RpoC_beta_prime"/>
</dbReference>
<dbReference type="InterPro" id="IPR012754">
    <property type="entry name" value="DNA-dir_RpoC_beta_prime_bact"/>
</dbReference>
<dbReference type="InterPro" id="IPR000722">
    <property type="entry name" value="RNA_pol_asu"/>
</dbReference>
<dbReference type="InterPro" id="IPR006592">
    <property type="entry name" value="RNA_pol_N"/>
</dbReference>
<dbReference type="InterPro" id="IPR007080">
    <property type="entry name" value="RNA_pol_Rpb1_1"/>
</dbReference>
<dbReference type="InterPro" id="IPR007066">
    <property type="entry name" value="RNA_pol_Rpb1_3"/>
</dbReference>
<dbReference type="InterPro" id="IPR042102">
    <property type="entry name" value="RNA_pol_Rpb1_3_sf"/>
</dbReference>
<dbReference type="InterPro" id="IPR007083">
    <property type="entry name" value="RNA_pol_Rpb1_4"/>
</dbReference>
<dbReference type="InterPro" id="IPR007081">
    <property type="entry name" value="RNA_pol_Rpb1_5"/>
</dbReference>
<dbReference type="InterPro" id="IPR044893">
    <property type="entry name" value="RNA_pol_Rpb1_clamp_domain"/>
</dbReference>
<dbReference type="InterPro" id="IPR038120">
    <property type="entry name" value="Rpb1_funnel_sf"/>
</dbReference>
<dbReference type="NCBIfam" id="NF011498">
    <property type="entry name" value="PRK14906.1"/>
    <property type="match status" value="1"/>
</dbReference>
<dbReference type="NCBIfam" id="TIGR02388">
    <property type="entry name" value="rpoC2_cyan"/>
    <property type="match status" value="1"/>
</dbReference>
<dbReference type="NCBIfam" id="TIGR02386">
    <property type="entry name" value="rpoC_TIGR"/>
    <property type="match status" value="1"/>
</dbReference>
<dbReference type="PANTHER" id="PTHR19376">
    <property type="entry name" value="DNA-DIRECTED RNA POLYMERASE"/>
    <property type="match status" value="1"/>
</dbReference>
<dbReference type="PANTHER" id="PTHR19376:SF54">
    <property type="entry name" value="DNA-DIRECTED RNA POLYMERASE SUBUNIT BETA"/>
    <property type="match status" value="1"/>
</dbReference>
<dbReference type="Pfam" id="PF04997">
    <property type="entry name" value="RNA_pol_Rpb1_1"/>
    <property type="match status" value="1"/>
</dbReference>
<dbReference type="Pfam" id="PF00623">
    <property type="entry name" value="RNA_pol_Rpb1_2"/>
    <property type="match status" value="1"/>
</dbReference>
<dbReference type="Pfam" id="PF04983">
    <property type="entry name" value="RNA_pol_Rpb1_3"/>
    <property type="match status" value="1"/>
</dbReference>
<dbReference type="Pfam" id="PF05000">
    <property type="entry name" value="RNA_pol_Rpb1_4"/>
    <property type="match status" value="1"/>
</dbReference>
<dbReference type="Pfam" id="PF04998">
    <property type="entry name" value="RNA_pol_Rpb1_5"/>
    <property type="match status" value="2"/>
</dbReference>
<dbReference type="SMART" id="SM00663">
    <property type="entry name" value="RPOLA_N"/>
    <property type="match status" value="1"/>
</dbReference>
<dbReference type="SUPFAM" id="SSF64484">
    <property type="entry name" value="beta and beta-prime subunits of DNA dependent RNA-polymerase"/>
    <property type="match status" value="1"/>
</dbReference>